<comment type="function">
    <text evidence="1">Poorly processive, error-prone DNA polymerase involved in untargeted mutagenesis. Copies undamaged DNA at stalled replication forks, which arise in vivo from mismatched or misaligned primer ends. These misaligned primers can be extended by PolIV. Exhibits no 3'-5' exonuclease (proofreading) activity. May be involved in translesional synthesis, in conjunction with the beta clamp from PolIII.</text>
</comment>
<comment type="catalytic activity">
    <reaction evidence="1">
        <text>DNA(n) + a 2'-deoxyribonucleoside 5'-triphosphate = DNA(n+1) + diphosphate</text>
        <dbReference type="Rhea" id="RHEA:22508"/>
        <dbReference type="Rhea" id="RHEA-COMP:17339"/>
        <dbReference type="Rhea" id="RHEA-COMP:17340"/>
        <dbReference type="ChEBI" id="CHEBI:33019"/>
        <dbReference type="ChEBI" id="CHEBI:61560"/>
        <dbReference type="ChEBI" id="CHEBI:173112"/>
        <dbReference type="EC" id="2.7.7.7"/>
    </reaction>
</comment>
<comment type="cofactor">
    <cofactor evidence="1">
        <name>Mg(2+)</name>
        <dbReference type="ChEBI" id="CHEBI:18420"/>
    </cofactor>
    <text evidence="1">Binds 2 magnesium ions per subunit.</text>
</comment>
<comment type="subunit">
    <text evidence="1">Monomer.</text>
</comment>
<comment type="subcellular location">
    <subcellularLocation>
        <location evidence="1">Cytoplasm</location>
    </subcellularLocation>
</comment>
<comment type="similarity">
    <text evidence="1">Belongs to the DNA polymerase type-Y family.</text>
</comment>
<protein>
    <recommendedName>
        <fullName evidence="1">DNA polymerase IV</fullName>
        <shortName evidence="1">Pol IV</shortName>
        <ecNumber evidence="1">2.7.7.7</ecNumber>
    </recommendedName>
</protein>
<reference key="1">
    <citation type="journal article" date="2003" name="Nucleic Acids Res.">
        <title>The complete genome sequence and analysis of Corynebacterium diphtheriae NCTC13129.</title>
        <authorList>
            <person name="Cerdeno-Tarraga A.-M."/>
            <person name="Efstratiou A."/>
            <person name="Dover L.G."/>
            <person name="Holden M.T.G."/>
            <person name="Pallen M.J."/>
            <person name="Bentley S.D."/>
            <person name="Besra G.S."/>
            <person name="Churcher C.M."/>
            <person name="James K.D."/>
            <person name="De Zoysa A."/>
            <person name="Chillingworth T."/>
            <person name="Cronin A."/>
            <person name="Dowd L."/>
            <person name="Feltwell T."/>
            <person name="Hamlin N."/>
            <person name="Holroyd S."/>
            <person name="Jagels K."/>
            <person name="Moule S."/>
            <person name="Quail M.A."/>
            <person name="Rabbinowitsch E."/>
            <person name="Rutherford K.M."/>
            <person name="Thomson N.R."/>
            <person name="Unwin L."/>
            <person name="Whitehead S."/>
            <person name="Barrell B.G."/>
            <person name="Parkhill J."/>
        </authorList>
    </citation>
    <scope>NUCLEOTIDE SEQUENCE [LARGE SCALE GENOMIC DNA]</scope>
    <source>
        <strain>ATCC 700971 / NCTC 13129 / Biotype gravis</strain>
    </source>
</reference>
<gene>
    <name evidence="1" type="primary">dinB</name>
    <name type="ordered locus">DIP1588</name>
</gene>
<keyword id="KW-0963">Cytoplasm</keyword>
<keyword id="KW-0227">DNA damage</keyword>
<keyword id="KW-0234">DNA repair</keyword>
<keyword id="KW-0235">DNA replication</keyword>
<keyword id="KW-0238">DNA-binding</keyword>
<keyword id="KW-0239">DNA-directed DNA polymerase</keyword>
<keyword id="KW-0460">Magnesium</keyword>
<keyword id="KW-0479">Metal-binding</keyword>
<keyword id="KW-0515">Mutator protein</keyword>
<keyword id="KW-0548">Nucleotidyltransferase</keyword>
<keyword id="KW-1185">Reference proteome</keyword>
<keyword id="KW-0808">Transferase</keyword>
<accession>Q6NGD8</accession>
<organism>
    <name type="scientific">Corynebacterium diphtheriae (strain ATCC 700971 / NCTC 13129 / Biotype gravis)</name>
    <dbReference type="NCBI Taxonomy" id="257309"/>
    <lineage>
        <taxon>Bacteria</taxon>
        <taxon>Bacillati</taxon>
        <taxon>Actinomycetota</taxon>
        <taxon>Actinomycetes</taxon>
        <taxon>Mycobacteriales</taxon>
        <taxon>Corynebacteriaceae</taxon>
        <taxon>Corynebacterium</taxon>
    </lineage>
</organism>
<sequence length="451" mass="49208">MQRWVIHVDMDAFFASCEQLTRPTLRGRPVLVGGASGRGVVAGASYEARTFGARSAMPMYQAKALIGMRGVVVSPRFAVYRAASQRVFSILERMGGTVEKISIDEGFVEPPELYGASASEVDTWAQRLRAVIRDETGLPASVGGGAGKQVAKICSDLAKPDGIYLCAASEHEEKMYPLPVGRLWGVGPVTRTKLQQLGVETIGDLARMSEREIDISLGTTVGRSLWRLAQGHDDREVAPRAIAKQISVEHTYPKDLVTSRAVDTAIIRASRESHRRLLDDGRGARTVSVKLRMADFRIESRSATLPYATDNLDTVTATALKLARYPDEVGPIRLVGVGLSGLEDARQDILFPELDRVVPVKDTDFEVGVSDPHDSDLEISTTDESPTAIGWRATQDIWHPDYGHGWVQGLGHGKITVRFETRTTGPGKVRTFDTNDALLSSADPINSLDWS</sequence>
<feature type="chain" id="PRO_1000084886" description="DNA polymerase IV">
    <location>
        <begin position="1"/>
        <end position="451"/>
    </location>
</feature>
<feature type="domain" description="UmuC" evidence="1">
    <location>
        <begin position="5"/>
        <end position="187"/>
    </location>
</feature>
<feature type="active site" evidence="1">
    <location>
        <position position="105"/>
    </location>
</feature>
<feature type="binding site" evidence="1">
    <location>
        <position position="9"/>
    </location>
    <ligand>
        <name>Mg(2+)</name>
        <dbReference type="ChEBI" id="CHEBI:18420"/>
    </ligand>
</feature>
<feature type="binding site" evidence="1">
    <location>
        <position position="104"/>
    </location>
    <ligand>
        <name>Mg(2+)</name>
        <dbReference type="ChEBI" id="CHEBI:18420"/>
    </ligand>
</feature>
<feature type="site" description="Substrate discrimination" evidence="1">
    <location>
        <position position="14"/>
    </location>
</feature>
<evidence type="ECO:0000255" key="1">
    <source>
        <dbReference type="HAMAP-Rule" id="MF_01113"/>
    </source>
</evidence>
<proteinExistence type="inferred from homology"/>
<dbReference type="EC" id="2.7.7.7" evidence="1"/>
<dbReference type="EMBL" id="BX248358">
    <property type="protein sequence ID" value="CAE50113.1"/>
    <property type="molecule type" value="Genomic_DNA"/>
</dbReference>
<dbReference type="RefSeq" id="WP_010935177.1">
    <property type="nucleotide sequence ID" value="NC_002935.2"/>
</dbReference>
<dbReference type="SMR" id="Q6NGD8"/>
<dbReference type="STRING" id="257309.DIP1588"/>
<dbReference type="KEGG" id="cdi:DIP1588"/>
<dbReference type="HOGENOM" id="CLU_012348_1_0_11"/>
<dbReference type="Proteomes" id="UP000002198">
    <property type="component" value="Chromosome"/>
</dbReference>
<dbReference type="GO" id="GO:0005829">
    <property type="term" value="C:cytosol"/>
    <property type="evidence" value="ECO:0007669"/>
    <property type="project" value="TreeGrafter"/>
</dbReference>
<dbReference type="GO" id="GO:0003684">
    <property type="term" value="F:damaged DNA binding"/>
    <property type="evidence" value="ECO:0007669"/>
    <property type="project" value="InterPro"/>
</dbReference>
<dbReference type="GO" id="GO:0003887">
    <property type="term" value="F:DNA-directed DNA polymerase activity"/>
    <property type="evidence" value="ECO:0007669"/>
    <property type="project" value="UniProtKB-UniRule"/>
</dbReference>
<dbReference type="GO" id="GO:0000287">
    <property type="term" value="F:magnesium ion binding"/>
    <property type="evidence" value="ECO:0007669"/>
    <property type="project" value="UniProtKB-UniRule"/>
</dbReference>
<dbReference type="GO" id="GO:0006261">
    <property type="term" value="P:DNA-templated DNA replication"/>
    <property type="evidence" value="ECO:0007669"/>
    <property type="project" value="UniProtKB-UniRule"/>
</dbReference>
<dbReference type="GO" id="GO:0042276">
    <property type="term" value="P:error-prone translesion synthesis"/>
    <property type="evidence" value="ECO:0007669"/>
    <property type="project" value="TreeGrafter"/>
</dbReference>
<dbReference type="GO" id="GO:0009432">
    <property type="term" value="P:SOS response"/>
    <property type="evidence" value="ECO:0007669"/>
    <property type="project" value="TreeGrafter"/>
</dbReference>
<dbReference type="CDD" id="cd03586">
    <property type="entry name" value="PolY_Pol_IV_kappa"/>
    <property type="match status" value="1"/>
</dbReference>
<dbReference type="Gene3D" id="3.30.70.270">
    <property type="match status" value="1"/>
</dbReference>
<dbReference type="Gene3D" id="3.40.1170.60">
    <property type="match status" value="1"/>
</dbReference>
<dbReference type="Gene3D" id="1.10.150.20">
    <property type="entry name" value="5' to 3' exonuclease, C-terminal subdomain"/>
    <property type="match status" value="1"/>
</dbReference>
<dbReference type="Gene3D" id="3.30.1490.100">
    <property type="entry name" value="DNA polymerase, Y-family, little finger domain"/>
    <property type="match status" value="1"/>
</dbReference>
<dbReference type="HAMAP" id="MF_01113">
    <property type="entry name" value="DNApol_IV"/>
    <property type="match status" value="1"/>
</dbReference>
<dbReference type="InterPro" id="IPR043502">
    <property type="entry name" value="DNA/RNA_pol_sf"/>
</dbReference>
<dbReference type="InterPro" id="IPR036775">
    <property type="entry name" value="DNA_pol_Y-fam_lit_finger_sf"/>
</dbReference>
<dbReference type="InterPro" id="IPR017961">
    <property type="entry name" value="DNA_pol_Y-fam_little_finger"/>
</dbReference>
<dbReference type="InterPro" id="IPR050116">
    <property type="entry name" value="DNA_polymerase-Y"/>
</dbReference>
<dbReference type="InterPro" id="IPR022880">
    <property type="entry name" value="DNApol_IV"/>
</dbReference>
<dbReference type="InterPro" id="IPR053848">
    <property type="entry name" value="IMS_HHH_1"/>
</dbReference>
<dbReference type="InterPro" id="IPR043128">
    <property type="entry name" value="Rev_trsase/Diguanyl_cyclase"/>
</dbReference>
<dbReference type="InterPro" id="IPR001126">
    <property type="entry name" value="UmuC"/>
</dbReference>
<dbReference type="NCBIfam" id="NF002677">
    <property type="entry name" value="PRK02406.1"/>
    <property type="match status" value="1"/>
</dbReference>
<dbReference type="NCBIfam" id="NF002882">
    <property type="entry name" value="PRK03348.1"/>
    <property type="match status" value="1"/>
</dbReference>
<dbReference type="PANTHER" id="PTHR11076:SF33">
    <property type="entry name" value="DNA POLYMERASE KAPPA"/>
    <property type="match status" value="1"/>
</dbReference>
<dbReference type="PANTHER" id="PTHR11076">
    <property type="entry name" value="DNA REPAIR POLYMERASE UMUC / TRANSFERASE FAMILY MEMBER"/>
    <property type="match status" value="1"/>
</dbReference>
<dbReference type="Pfam" id="PF00817">
    <property type="entry name" value="IMS"/>
    <property type="match status" value="1"/>
</dbReference>
<dbReference type="Pfam" id="PF11799">
    <property type="entry name" value="IMS_C"/>
    <property type="match status" value="1"/>
</dbReference>
<dbReference type="Pfam" id="PF21999">
    <property type="entry name" value="IMS_HHH_1"/>
    <property type="match status" value="1"/>
</dbReference>
<dbReference type="SUPFAM" id="SSF56672">
    <property type="entry name" value="DNA/RNA polymerases"/>
    <property type="match status" value="1"/>
</dbReference>
<dbReference type="SUPFAM" id="SSF100879">
    <property type="entry name" value="Lesion bypass DNA polymerase (Y-family), little finger domain"/>
    <property type="match status" value="1"/>
</dbReference>
<dbReference type="PROSITE" id="PS50173">
    <property type="entry name" value="UMUC"/>
    <property type="match status" value="1"/>
</dbReference>
<name>DPO4_CORDI</name>